<dbReference type="EMBL" id="Z74986">
    <property type="protein sequence ID" value="CAA99271.1"/>
    <property type="molecule type" value="Genomic_DNA"/>
</dbReference>
<dbReference type="EMBL" id="Z70678">
    <property type="protein sequence ID" value="CAA94563.1"/>
    <property type="molecule type" value="Genomic_DNA"/>
</dbReference>
<dbReference type="EMBL" id="BK006948">
    <property type="protein sequence ID" value="DAA10857.1"/>
    <property type="molecule type" value="Genomic_DNA"/>
</dbReference>
<dbReference type="PIR" id="S66961">
    <property type="entry name" value="S66961"/>
</dbReference>
<dbReference type="RefSeq" id="NP_014721.1">
    <property type="nucleotide sequence ID" value="NM_001183497.1"/>
</dbReference>
<dbReference type="PDB" id="5WLC">
    <property type="method" value="EM"/>
    <property type="resolution" value="3.80 A"/>
    <property type="chains" value="ND=1-214"/>
</dbReference>
<dbReference type="PDB" id="6KE6">
    <property type="method" value="EM"/>
    <property type="resolution" value="3.40 A"/>
    <property type="chains" value="5B=1-214"/>
</dbReference>
<dbReference type="PDB" id="6LQP">
    <property type="method" value="EM"/>
    <property type="resolution" value="3.20 A"/>
    <property type="chains" value="5B=1-214"/>
</dbReference>
<dbReference type="PDB" id="6LQQ">
    <property type="method" value="EM"/>
    <property type="resolution" value="4.10 A"/>
    <property type="chains" value="5B=1-214"/>
</dbReference>
<dbReference type="PDB" id="6LQR">
    <property type="method" value="EM"/>
    <property type="resolution" value="8.60 A"/>
    <property type="chains" value="5B=1-214"/>
</dbReference>
<dbReference type="PDB" id="6LQS">
    <property type="method" value="EM"/>
    <property type="resolution" value="3.80 A"/>
    <property type="chains" value="5B=1-214"/>
</dbReference>
<dbReference type="PDB" id="6LQU">
    <property type="method" value="EM"/>
    <property type="resolution" value="3.70 A"/>
    <property type="chains" value="5B=1-214"/>
</dbReference>
<dbReference type="PDB" id="6LQV">
    <property type="method" value="EM"/>
    <property type="resolution" value="4.80 A"/>
    <property type="chains" value="5B=1-214"/>
</dbReference>
<dbReference type="PDB" id="6ND4">
    <property type="method" value="EM"/>
    <property type="resolution" value="4.30 A"/>
    <property type="chains" value="D=1-214"/>
</dbReference>
<dbReference type="PDB" id="6ZQA">
    <property type="method" value="EM"/>
    <property type="resolution" value="4.40 A"/>
    <property type="chains" value="UP=1-214"/>
</dbReference>
<dbReference type="PDB" id="6ZQB">
    <property type="method" value="EM"/>
    <property type="resolution" value="3.90 A"/>
    <property type="chains" value="UP=1-214"/>
</dbReference>
<dbReference type="PDB" id="6ZQC">
    <property type="method" value="EM"/>
    <property type="resolution" value="3.80 A"/>
    <property type="chains" value="UP=1-214"/>
</dbReference>
<dbReference type="PDB" id="6ZQD">
    <property type="method" value="EM"/>
    <property type="resolution" value="3.80 A"/>
    <property type="chains" value="UP=1-214"/>
</dbReference>
<dbReference type="PDB" id="6ZQE">
    <property type="method" value="EM"/>
    <property type="resolution" value="7.10 A"/>
    <property type="chains" value="UP=1-214"/>
</dbReference>
<dbReference type="PDB" id="7AJT">
    <property type="method" value="EM"/>
    <property type="resolution" value="4.60 A"/>
    <property type="chains" value="UP=1-214"/>
</dbReference>
<dbReference type="PDB" id="7AJU">
    <property type="method" value="EM"/>
    <property type="resolution" value="3.80 A"/>
    <property type="chains" value="UP=1-214"/>
</dbReference>
<dbReference type="PDB" id="7D4I">
    <property type="method" value="EM"/>
    <property type="resolution" value="4.00 A"/>
    <property type="chains" value="5B=1-214"/>
</dbReference>
<dbReference type="PDB" id="7D5S">
    <property type="method" value="EM"/>
    <property type="resolution" value="4.60 A"/>
    <property type="chains" value="5B=1-214"/>
</dbReference>
<dbReference type="PDB" id="7D63">
    <property type="method" value="EM"/>
    <property type="resolution" value="12.30 A"/>
    <property type="chains" value="5B=1-214"/>
</dbReference>
<dbReference type="PDB" id="7SUK">
    <property type="method" value="EM"/>
    <property type="resolution" value="3.99 A"/>
    <property type="chains" value="ND=155-214"/>
</dbReference>
<dbReference type="PDBsum" id="5WLC"/>
<dbReference type="PDBsum" id="6KE6"/>
<dbReference type="PDBsum" id="6LQP"/>
<dbReference type="PDBsum" id="6LQQ"/>
<dbReference type="PDBsum" id="6LQR"/>
<dbReference type="PDBsum" id="6LQS"/>
<dbReference type="PDBsum" id="6LQU"/>
<dbReference type="PDBsum" id="6LQV"/>
<dbReference type="PDBsum" id="6ND4"/>
<dbReference type="PDBsum" id="6ZQA"/>
<dbReference type="PDBsum" id="6ZQB"/>
<dbReference type="PDBsum" id="6ZQC"/>
<dbReference type="PDBsum" id="6ZQD"/>
<dbReference type="PDBsum" id="6ZQE"/>
<dbReference type="PDBsum" id="7AJT"/>
<dbReference type="PDBsum" id="7AJU"/>
<dbReference type="PDBsum" id="7D4I"/>
<dbReference type="PDBsum" id="7D5S"/>
<dbReference type="PDBsum" id="7D63"/>
<dbReference type="PDBsum" id="7SUK"/>
<dbReference type="EMDB" id="EMD-0441"/>
<dbReference type="EMDB" id="EMD-0949"/>
<dbReference type="EMDB" id="EMD-0950"/>
<dbReference type="EMDB" id="EMD-0951"/>
<dbReference type="EMDB" id="EMD-0952"/>
<dbReference type="EMDB" id="EMD-0954"/>
<dbReference type="EMDB" id="EMD-0955"/>
<dbReference type="EMDB" id="EMD-11357"/>
<dbReference type="EMDB" id="EMD-11358"/>
<dbReference type="EMDB" id="EMD-11359"/>
<dbReference type="EMDB" id="EMD-11360"/>
<dbReference type="EMDB" id="EMD-11361"/>
<dbReference type="EMDB" id="EMD-11807"/>
<dbReference type="EMDB" id="EMD-11808"/>
<dbReference type="EMDB" id="EMD-25441"/>
<dbReference type="EMDB" id="EMD-30574"/>
<dbReference type="EMDB" id="EMD-30584"/>
<dbReference type="EMDB" id="EMD-30588"/>
<dbReference type="EMDB" id="EMD-8859"/>
<dbReference type="EMDB" id="EMD-9964"/>
<dbReference type="SMR" id="Q08492"/>
<dbReference type="BioGRID" id="34477">
    <property type="interactions" value="409"/>
</dbReference>
<dbReference type="ComplexPortal" id="CPX-1604">
    <property type="entry name" value="Small ribosomal subunit processome"/>
</dbReference>
<dbReference type="DIP" id="DIP-1392N"/>
<dbReference type="FunCoup" id="Q08492">
    <property type="interactions" value="319"/>
</dbReference>
<dbReference type="IntAct" id="Q08492">
    <property type="interactions" value="83"/>
</dbReference>
<dbReference type="MINT" id="Q08492"/>
<dbReference type="STRING" id="4932.YOR078W"/>
<dbReference type="iPTMnet" id="Q08492"/>
<dbReference type="PaxDb" id="4932-YOR078W"/>
<dbReference type="PeptideAtlas" id="Q08492"/>
<dbReference type="EnsemblFungi" id="YOR078W_mRNA">
    <property type="protein sequence ID" value="YOR078W"/>
    <property type="gene ID" value="YOR078W"/>
</dbReference>
<dbReference type="GeneID" id="854245"/>
<dbReference type="KEGG" id="sce:YOR078W"/>
<dbReference type="AGR" id="SGD:S000005604"/>
<dbReference type="SGD" id="S000005604">
    <property type="gene designation" value="BUD21"/>
</dbReference>
<dbReference type="VEuPathDB" id="FungiDB:YOR078W"/>
<dbReference type="eggNOG" id="ENOG502S51X">
    <property type="taxonomic scope" value="Eukaryota"/>
</dbReference>
<dbReference type="HOGENOM" id="CLU_077704_0_0_1"/>
<dbReference type="InParanoid" id="Q08492"/>
<dbReference type="OMA" id="IRSKDRW"/>
<dbReference type="OrthoDB" id="4096107at2759"/>
<dbReference type="BioCyc" id="YEAST:G3O-33615-MONOMER"/>
<dbReference type="BioGRID-ORCS" id="854245">
    <property type="hits" value="0 hits in 10 CRISPR screens"/>
</dbReference>
<dbReference type="CD-CODE" id="BDAE0F88">
    <property type="entry name" value="Nucleolus"/>
</dbReference>
<dbReference type="PRO" id="PR:Q08492"/>
<dbReference type="Proteomes" id="UP000002311">
    <property type="component" value="Chromosome XV"/>
</dbReference>
<dbReference type="RNAct" id="Q08492">
    <property type="molecule type" value="protein"/>
</dbReference>
<dbReference type="GO" id="GO:0030686">
    <property type="term" value="C:90S preribosome"/>
    <property type="evidence" value="ECO:0007005"/>
    <property type="project" value="SGD"/>
</dbReference>
<dbReference type="GO" id="GO:0005730">
    <property type="term" value="C:nucleolus"/>
    <property type="evidence" value="ECO:0000314"/>
    <property type="project" value="SGD"/>
</dbReference>
<dbReference type="GO" id="GO:0032040">
    <property type="term" value="C:small-subunit processome"/>
    <property type="evidence" value="ECO:0000314"/>
    <property type="project" value="SGD"/>
</dbReference>
<dbReference type="GO" id="GO:0034511">
    <property type="term" value="F:U3 snoRNA binding"/>
    <property type="evidence" value="ECO:0000314"/>
    <property type="project" value="SGD"/>
</dbReference>
<dbReference type="GO" id="GO:0000447">
    <property type="term" value="P:endonucleolytic cleavage in ITS1 to separate SSU-rRNA from 5.8S rRNA and LSU-rRNA from tricistronic rRNA transcript (SSU-rRNA, 5.8S rRNA, LSU-rRNA)"/>
    <property type="evidence" value="ECO:0000315"/>
    <property type="project" value="SGD"/>
</dbReference>
<dbReference type="GO" id="GO:0000472">
    <property type="term" value="P:endonucleolytic cleavage to generate mature 5'-end of SSU-rRNA from (SSU-rRNA, 5.8S rRNA, LSU-rRNA)"/>
    <property type="evidence" value="ECO:0000315"/>
    <property type="project" value="SGD"/>
</dbReference>
<dbReference type="GO" id="GO:0030490">
    <property type="term" value="P:maturation of SSU-rRNA"/>
    <property type="evidence" value="ECO:0000303"/>
    <property type="project" value="ComplexPortal"/>
</dbReference>
<dbReference type="GO" id="GO:0000462">
    <property type="term" value="P:maturation of SSU-rRNA from tricistronic rRNA transcript (SSU-rRNA, 5.8S rRNA, LSU-rRNA)"/>
    <property type="evidence" value="ECO:0000315"/>
    <property type="project" value="SGD"/>
</dbReference>
<dbReference type="InterPro" id="IPR013268">
    <property type="entry name" value="UTP16"/>
</dbReference>
<dbReference type="Pfam" id="PF08297">
    <property type="entry name" value="U3_snoRNA_assoc"/>
    <property type="match status" value="1"/>
</dbReference>
<reference key="1">
    <citation type="journal article" date="1997" name="Yeast">
        <title>The sequence of a 54.7 kb fragment of yeast chromosome XV reveals the presence of two tRNAs and 24 new open reading frames.</title>
        <authorList>
            <person name="Valens M."/>
            <person name="Bohn C."/>
            <person name="Daignan-Fornier B."/>
            <person name="Dang V.-D."/>
            <person name="Bolotin-Fukuhara M."/>
        </authorList>
    </citation>
    <scope>NUCLEOTIDE SEQUENCE [GENOMIC DNA]</scope>
</reference>
<reference key="2">
    <citation type="journal article" date="1997" name="Nature">
        <title>The nucleotide sequence of Saccharomyces cerevisiae chromosome XV.</title>
        <authorList>
            <person name="Dujon B."/>
            <person name="Albermann K."/>
            <person name="Aldea M."/>
            <person name="Alexandraki D."/>
            <person name="Ansorge W."/>
            <person name="Arino J."/>
            <person name="Benes V."/>
            <person name="Bohn C."/>
            <person name="Bolotin-Fukuhara M."/>
            <person name="Bordonne R."/>
            <person name="Boyer J."/>
            <person name="Camasses A."/>
            <person name="Casamayor A."/>
            <person name="Casas C."/>
            <person name="Cheret G."/>
            <person name="Cziepluch C."/>
            <person name="Daignan-Fornier B."/>
            <person name="Dang V.-D."/>
            <person name="de Haan M."/>
            <person name="Delius H."/>
            <person name="Durand P."/>
            <person name="Fairhead C."/>
            <person name="Feldmann H."/>
            <person name="Gaillon L."/>
            <person name="Galisson F."/>
            <person name="Gamo F.-J."/>
            <person name="Gancedo C."/>
            <person name="Goffeau A."/>
            <person name="Goulding S.E."/>
            <person name="Grivell L.A."/>
            <person name="Habbig B."/>
            <person name="Hand N.J."/>
            <person name="Hani J."/>
            <person name="Hattenhorst U."/>
            <person name="Hebling U."/>
            <person name="Hernando Y."/>
            <person name="Herrero E."/>
            <person name="Heumann K."/>
            <person name="Hiesel R."/>
            <person name="Hilger F."/>
            <person name="Hofmann B."/>
            <person name="Hollenberg C.P."/>
            <person name="Hughes B."/>
            <person name="Jauniaux J.-C."/>
            <person name="Kalogeropoulos A."/>
            <person name="Katsoulou C."/>
            <person name="Kordes E."/>
            <person name="Lafuente M.J."/>
            <person name="Landt O."/>
            <person name="Louis E.J."/>
            <person name="Maarse A.C."/>
            <person name="Madania A."/>
            <person name="Mannhaupt G."/>
            <person name="Marck C."/>
            <person name="Martin R.P."/>
            <person name="Mewes H.-W."/>
            <person name="Michaux G."/>
            <person name="Paces V."/>
            <person name="Parle-McDermott A.G."/>
            <person name="Pearson B.M."/>
            <person name="Perrin A."/>
            <person name="Pettersson B."/>
            <person name="Poch O."/>
            <person name="Pohl T.M."/>
            <person name="Poirey R."/>
            <person name="Portetelle D."/>
            <person name="Pujol A."/>
            <person name="Purnelle B."/>
            <person name="Ramezani Rad M."/>
            <person name="Rechmann S."/>
            <person name="Schwager C."/>
            <person name="Schweizer M."/>
            <person name="Sor F."/>
            <person name="Sterky F."/>
            <person name="Tarassov I.A."/>
            <person name="Teodoru C."/>
            <person name="Tettelin H."/>
            <person name="Thierry A."/>
            <person name="Tobiasch E."/>
            <person name="Tzermia M."/>
            <person name="Uhlen M."/>
            <person name="Unseld M."/>
            <person name="Valens M."/>
            <person name="Vandenbol M."/>
            <person name="Vetter I."/>
            <person name="Vlcek C."/>
            <person name="Voet M."/>
            <person name="Volckaert G."/>
            <person name="Voss H."/>
            <person name="Wambutt R."/>
            <person name="Wedler H."/>
            <person name="Wiemann S."/>
            <person name="Winsor B."/>
            <person name="Wolfe K.H."/>
            <person name="Zollner A."/>
            <person name="Zumstein E."/>
            <person name="Kleine K."/>
        </authorList>
    </citation>
    <scope>NUCLEOTIDE SEQUENCE [LARGE SCALE GENOMIC DNA]</scope>
    <source>
        <strain>ATCC 204508 / S288c</strain>
    </source>
</reference>
<reference key="3">
    <citation type="journal article" date="2014" name="G3 (Bethesda)">
        <title>The reference genome sequence of Saccharomyces cerevisiae: Then and now.</title>
        <authorList>
            <person name="Engel S.R."/>
            <person name="Dietrich F.S."/>
            <person name="Fisk D.G."/>
            <person name="Binkley G."/>
            <person name="Balakrishnan R."/>
            <person name="Costanzo M.C."/>
            <person name="Dwight S.S."/>
            <person name="Hitz B.C."/>
            <person name="Karra K."/>
            <person name="Nash R.S."/>
            <person name="Weng S."/>
            <person name="Wong E.D."/>
            <person name="Lloyd P."/>
            <person name="Skrzypek M.S."/>
            <person name="Miyasato S.R."/>
            <person name="Simison M."/>
            <person name="Cherry J.M."/>
        </authorList>
    </citation>
    <scope>GENOME REANNOTATION</scope>
    <source>
        <strain>ATCC 204508 / S288c</strain>
    </source>
</reference>
<reference key="4">
    <citation type="journal article" date="2001" name="Mol. Biol. Cell">
        <title>A genomic study of the bipolar bud site selection pattern in Saccharomyces cerevisiae.</title>
        <authorList>
            <person name="Ni L."/>
            <person name="Snyder M."/>
        </authorList>
    </citation>
    <scope>FUNCTION</scope>
    <scope>SUBCELLULAR LOCATION</scope>
</reference>
<reference key="5">
    <citation type="journal article" date="2002" name="Nature">
        <title>A large nucleolar U3 ribonucleoprotein required for 18S ribosomal RNA biogenesis.</title>
        <authorList>
            <person name="Dragon F."/>
            <person name="Gallagher J.E.G."/>
            <person name="Compagnone-Post P.A."/>
            <person name="Mitchell B.M."/>
            <person name="Porwancher K.A."/>
            <person name="Wehner K.A."/>
            <person name="Wormsley S."/>
            <person name="Settlage R.E."/>
            <person name="Shabanowitz J."/>
            <person name="Osheim Y."/>
            <person name="Beyer A.L."/>
            <person name="Hunt D.F."/>
            <person name="Baserga S.J."/>
        </authorList>
    </citation>
    <scope>FUNCTION</scope>
    <scope>INTERACTION WITH MPP10 AND SNORNA U3</scope>
    <scope>IDENTIFICATION IN SSU PROCESSOME BY MASS SPECTROMETRY</scope>
    <scope>SUBCELLULAR LOCATION</scope>
</reference>
<reference key="6">
    <citation type="journal article" date="2003" name="Nature">
        <title>Global analysis of protein expression in yeast.</title>
        <authorList>
            <person name="Ghaemmaghami S."/>
            <person name="Huh W.-K."/>
            <person name="Bower K."/>
            <person name="Howson R.W."/>
            <person name="Belle A."/>
            <person name="Dephoure N."/>
            <person name="O'Shea E.K."/>
            <person name="Weissman J.S."/>
        </authorList>
    </citation>
    <scope>LEVEL OF PROTEIN EXPRESSION [LARGE SCALE ANALYSIS]</scope>
</reference>
<reference key="7">
    <citation type="journal article" date="2007" name="J. Proteome Res.">
        <title>Large-scale phosphorylation analysis of alpha-factor-arrested Saccharomyces cerevisiae.</title>
        <authorList>
            <person name="Li X."/>
            <person name="Gerber S.A."/>
            <person name="Rudner A.D."/>
            <person name="Beausoleil S.A."/>
            <person name="Haas W."/>
            <person name="Villen J."/>
            <person name="Elias J.E."/>
            <person name="Gygi S.P."/>
        </authorList>
    </citation>
    <scope>PHOSPHORYLATION [LARGE SCALE ANALYSIS] AT SER-144</scope>
    <scope>IDENTIFICATION BY MASS SPECTROMETRY [LARGE SCALE ANALYSIS]</scope>
    <source>
        <strain>ADR376</strain>
    </source>
</reference>
<reference key="8">
    <citation type="journal article" date="2007" name="Proc. Natl. Acad. Sci. U.S.A.">
        <title>Analysis of phosphorylation sites on proteins from Saccharomyces cerevisiae by electron transfer dissociation (ETD) mass spectrometry.</title>
        <authorList>
            <person name="Chi A."/>
            <person name="Huttenhower C."/>
            <person name="Geer L.Y."/>
            <person name="Coon J.J."/>
            <person name="Syka J.E.P."/>
            <person name="Bai D.L."/>
            <person name="Shabanowitz J."/>
            <person name="Burke D.J."/>
            <person name="Troyanskaya O.G."/>
            <person name="Hunt D.F."/>
        </authorList>
    </citation>
    <scope>PHOSPHORYLATION [LARGE SCALE ANALYSIS] AT SER-45</scope>
    <scope>IDENTIFICATION BY MASS SPECTROMETRY [LARGE SCALE ANALYSIS]</scope>
</reference>
<reference key="9">
    <citation type="journal article" date="2008" name="Mol. Cell. Proteomics">
        <title>A multidimensional chromatography technology for in-depth phosphoproteome analysis.</title>
        <authorList>
            <person name="Albuquerque C.P."/>
            <person name="Smolka M.B."/>
            <person name="Payne S.H."/>
            <person name="Bafna V."/>
            <person name="Eng J."/>
            <person name="Zhou H."/>
        </authorList>
    </citation>
    <scope>PHOSPHORYLATION [LARGE SCALE ANALYSIS] AT SER-65 AND SER-144</scope>
    <scope>IDENTIFICATION BY MASS SPECTROMETRY [LARGE SCALE ANALYSIS]</scope>
</reference>
<reference key="10">
    <citation type="journal article" date="2009" name="Science">
        <title>Global analysis of Cdk1 substrate phosphorylation sites provides insights into evolution.</title>
        <authorList>
            <person name="Holt L.J."/>
            <person name="Tuch B.B."/>
            <person name="Villen J."/>
            <person name="Johnson A.D."/>
            <person name="Gygi S.P."/>
            <person name="Morgan D.O."/>
        </authorList>
    </citation>
    <scope>PHOSPHORYLATION [LARGE SCALE ANALYSIS] AT SER-16 AND SER-144</scope>
    <scope>IDENTIFICATION BY MASS SPECTROMETRY [LARGE SCALE ANALYSIS]</scope>
</reference>
<evidence type="ECO:0000250" key="1">
    <source>
        <dbReference type="UniProtKB" id="Q9UMY1"/>
    </source>
</evidence>
<evidence type="ECO:0000256" key="2">
    <source>
        <dbReference type="SAM" id="MobiDB-lite"/>
    </source>
</evidence>
<evidence type="ECO:0000269" key="3">
    <source>
    </source>
</evidence>
<evidence type="ECO:0000269" key="4">
    <source>
    </source>
</evidence>
<evidence type="ECO:0000269" key="5">
    <source>
    </source>
</evidence>
<evidence type="ECO:0000305" key="6"/>
<evidence type="ECO:0007744" key="7">
    <source>
    </source>
</evidence>
<evidence type="ECO:0007744" key="8">
    <source>
    </source>
</evidence>
<evidence type="ECO:0007744" key="9">
    <source>
    </source>
</evidence>
<evidence type="ECO:0007744" key="10">
    <source>
    </source>
</evidence>
<sequence length="214" mass="24385">MSNGHVKFDADESQASASAVTDRQDDVLVISKKDKEVHSSSDEESDDDDAPQEEGLHSGKSEVESQITQREEAIRLEQSQLRSKRRKQNELYAKQKKSVNETEVTDEVIAELPEELLKNIDQKDEGSTQYSSSRHVTFDKLDESDENEEALAKAIKTKKRKTLKNLRKDSVKRGKFRVQLLSTTQDSKTLPPKKESSIIRSKDRWLNRKALNKG</sequence>
<comment type="function">
    <text evidence="1 3 4">Functions as part of the small subunit (SSU) processome, first precursor of the small eukaryotic ribosomal subunit that coordinates the first two steps of ribosome biogenesis in transcription of the primary transcript pre-RNA and pre-18S processing (PubMed:12068309). During the assembly of the SSU processome in the nucleolus, many ribosome biogenesis factors, an RNA chaperone and ribosomal proteins associate with the nascent pre-rRNA and work in concert to generate RNA folding, modifications, rearrangements and cleavage as well as targeted degradation of pre-ribosomal RNA by the RNA exosome (By similarity). Has a role in bud site selection maybe via the regulation of expression of bipolar budding components (PubMed:11452010).</text>
</comment>
<comment type="subunit">
    <text evidence="4">Part of the small subunit (SSU) processome composed of at least 40 protein subunits and the RNA chaperone small nucleolar RNA (snoRNA) U3 (PubMed:12068309). Interacts with snoRNA U3 (PubMed:12068309). Interacts with MPP10 (PubMed:12068309).</text>
</comment>
<comment type="subcellular location">
    <subcellularLocation>
        <location evidence="3 4">Nucleus</location>
        <location evidence="3 4">Nucleolus</location>
    </subcellularLocation>
</comment>
<comment type="miscellaneous">
    <text evidence="5">Present with 2120 molecules/cell in log phase SD medium.</text>
</comment>
<comment type="similarity">
    <text evidence="6">Belongs to the UTP16 family.</text>
</comment>
<gene>
    <name type="primary">BUD21</name>
    <name type="synonym">UTP16</name>
    <name type="ordered locus">YOR078W</name>
    <name type="ORF">YOR29-29</name>
</gene>
<organism>
    <name type="scientific">Saccharomyces cerevisiae (strain ATCC 204508 / S288c)</name>
    <name type="common">Baker's yeast</name>
    <dbReference type="NCBI Taxonomy" id="559292"/>
    <lineage>
        <taxon>Eukaryota</taxon>
        <taxon>Fungi</taxon>
        <taxon>Dikarya</taxon>
        <taxon>Ascomycota</taxon>
        <taxon>Saccharomycotina</taxon>
        <taxon>Saccharomycetes</taxon>
        <taxon>Saccharomycetales</taxon>
        <taxon>Saccharomycetaceae</taxon>
        <taxon>Saccharomyces</taxon>
    </lineage>
</organism>
<feature type="chain" id="PRO_0000065013" description="U3 small nucleolar RNA-associated protein 16">
    <location>
        <begin position="1"/>
        <end position="214"/>
    </location>
</feature>
<feature type="region of interest" description="Disordered" evidence="2">
    <location>
        <begin position="1"/>
        <end position="106"/>
    </location>
</feature>
<feature type="region of interest" description="Disordered" evidence="2">
    <location>
        <begin position="182"/>
        <end position="214"/>
    </location>
</feature>
<feature type="compositionally biased region" description="Basic and acidic residues" evidence="2">
    <location>
        <begin position="1"/>
        <end position="10"/>
    </location>
</feature>
<feature type="compositionally biased region" description="Basic and acidic residues" evidence="2">
    <location>
        <begin position="22"/>
        <end position="41"/>
    </location>
</feature>
<feature type="compositionally biased region" description="Acidic residues" evidence="2">
    <location>
        <begin position="42"/>
        <end position="52"/>
    </location>
</feature>
<feature type="compositionally biased region" description="Basic and acidic residues" evidence="2">
    <location>
        <begin position="54"/>
        <end position="75"/>
    </location>
</feature>
<feature type="compositionally biased region" description="Basic and acidic residues" evidence="2">
    <location>
        <begin position="192"/>
        <end position="206"/>
    </location>
</feature>
<feature type="modified residue" description="Phosphoserine" evidence="10">
    <location>
        <position position="16"/>
    </location>
</feature>
<feature type="modified residue" description="Phosphoserine" evidence="7">
    <location>
        <position position="45"/>
    </location>
</feature>
<feature type="modified residue" description="Phosphoserine" evidence="9">
    <location>
        <position position="65"/>
    </location>
</feature>
<feature type="modified residue" description="Phosphoserine" evidence="8 9 10">
    <location>
        <position position="144"/>
    </location>
</feature>
<protein>
    <recommendedName>
        <fullName>U3 small nucleolar RNA-associated protein 16</fullName>
        <shortName>U3 snoRNA-associated protein 16</shortName>
    </recommendedName>
    <alternativeName>
        <fullName>Bud site selection protein 21</fullName>
    </alternativeName>
    <alternativeName>
        <fullName>U three protein 16</fullName>
    </alternativeName>
</protein>
<keyword id="KW-0002">3D-structure</keyword>
<keyword id="KW-0539">Nucleus</keyword>
<keyword id="KW-0597">Phosphoprotein</keyword>
<keyword id="KW-1185">Reference proteome</keyword>
<keyword id="KW-0687">Ribonucleoprotein</keyword>
<keyword id="KW-0690">Ribosome biogenesis</keyword>
<keyword id="KW-0698">rRNA processing</keyword>
<name>UTP16_YEAST</name>
<accession>Q08492</accession>
<accession>D6W2E1</accession>
<accession>O00033</accession>
<proteinExistence type="evidence at protein level"/>